<gene>
    <name type="primary">S10</name>
</gene>
<sequence length="558" mass="63266">MADIRLDIAPDLIHNGVPQRLSDTIILNNRPTITLLSHFNNLFHELNIVKAPHVASSQTTINLYIRFHLLTRLHHRLQTVETSTLPNITQFKDHIRSFFQNEHQPIFQTLTNNDLSEEFVGVTTFGLSLFATSKLDAEQIERVQIETLTEGNITLKPFSADGLEVILDDSYIGVVGKIPGLEVHKFLDKCCREVPAQMGILTDEVKLLMRTGKLRIDGGYDFNCPASTTDVTHYGGYDQFSRQMFERLNLFYNISLSIIPVSALKTVHLFEKELSVLDADKSLLEQTWSAVASFVETWQVKSKVKADDPDEYEMTSLSTLRTNYDGTSTSSPFTDKKFIDWYIKTFSKTEKGSSLRRNELEEKSASSISTTVKKVKIHFSVQYFDDFKVNGHEKSIVVQTHKGEMSLDYYRKIGEVLSAIWKRGKSLAVPCFDYIKLGVEKAFHLAPVIMKKYNLTIDDIINFIDKGPSYLAKLDKIDDCSLISKLIITSVLPNIIQRVYKTDPSNNVMNSVIISRANNLLKSDRDRVLKKALSANVSSSNTSSHEHTQKIVLNKVTR</sequence>
<accession>P19898</accession>
<organismHost>
    <name type="scientific">Avena sativa</name>
    <name type="common">Oat</name>
    <dbReference type="NCBI Taxonomy" id="4498"/>
</organismHost>
<organismHost>
    <name type="scientific">Hordeum vulgare</name>
    <name type="common">Barley</name>
    <dbReference type="NCBI Taxonomy" id="4513"/>
</organismHost>
<organismHost>
    <name type="scientific">Oryza sativa</name>
    <name type="common">Rice</name>
    <dbReference type="NCBI Taxonomy" id="4530"/>
</organismHost>
<organismHost>
    <name type="scientific">Triticum aestivum</name>
    <name type="common">Wheat</name>
    <dbReference type="NCBI Taxonomy" id="4565"/>
</organismHost>
<organismHost>
    <name type="scientific">Zea mays</name>
    <name type="common">Maize</name>
    <dbReference type="NCBI Taxonomy" id="4577"/>
</organismHost>
<proteinExistence type="predicted"/>
<feature type="chain" id="PRO_0000222807" description="Protein S10">
    <location>
        <begin position="1"/>
        <end position="558"/>
    </location>
</feature>
<feature type="region of interest" description="Disordered" evidence="1">
    <location>
        <begin position="539"/>
        <end position="558"/>
    </location>
</feature>
<evidence type="ECO:0000256" key="1">
    <source>
        <dbReference type="SAM" id="MobiDB-lite"/>
    </source>
</evidence>
<dbReference type="EMBL" id="D00606">
    <property type="protein sequence ID" value="BAA00481.1"/>
    <property type="molecule type" value="Genomic_RNA"/>
</dbReference>
<dbReference type="PIR" id="JQ0409">
    <property type="entry name" value="MWXRRT"/>
</dbReference>
<dbReference type="InterPro" id="IPR008618">
    <property type="entry name" value="S10"/>
</dbReference>
<dbReference type="Pfam" id="PF05880">
    <property type="entry name" value="Fiji_64_capsid"/>
    <property type="match status" value="1"/>
</dbReference>
<organism>
    <name type="scientific">Rice black streaked dwarf virus</name>
    <name type="common">RBSDV</name>
    <dbReference type="NCBI Taxonomy" id="10990"/>
    <lineage>
        <taxon>Viruses</taxon>
        <taxon>Riboviria</taxon>
        <taxon>Orthornavirae</taxon>
        <taxon>Duplornaviricota</taxon>
        <taxon>Resentoviricetes</taxon>
        <taxon>Reovirales</taxon>
        <taxon>Spinareoviridae</taxon>
        <taxon>Fijivirus</taxon>
    </lineage>
</organism>
<reference key="1">
    <citation type="journal article" date="1990" name="Proc. Jpn. Acad., B, Phys. Biol. Sci.">
        <title>Nucleotide sequence of rice black-streaked dwarf virus genome segment 10.</title>
        <authorList>
            <person name="Uyeda I."/>
            <person name="Azuhata F."/>
            <person name="Shikata E."/>
        </authorList>
    </citation>
    <scope>NUCLEOTIDE SEQUENCE [GENOMIC RNA]</scope>
</reference>
<protein>
    <recommendedName>
        <fullName>Protein S10</fullName>
    </recommendedName>
</protein>
<name>VP10_RBSDV</name>